<accession>Q8R9L3</accession>
<feature type="chain" id="PRO_0000098493" description="Isoleucine--tRNA ligase">
    <location>
        <begin position="1"/>
        <end position="932"/>
    </location>
</feature>
<feature type="short sequence motif" description="'HIGH' region">
    <location>
        <begin position="57"/>
        <end position="67"/>
    </location>
</feature>
<feature type="short sequence motif" description="'KMSKS' region">
    <location>
        <begin position="600"/>
        <end position="604"/>
    </location>
</feature>
<feature type="binding site" evidence="1">
    <location>
        <position position="559"/>
    </location>
    <ligand>
        <name>L-isoleucyl-5'-AMP</name>
        <dbReference type="ChEBI" id="CHEBI:178002"/>
    </ligand>
</feature>
<feature type="binding site" evidence="1">
    <location>
        <position position="603"/>
    </location>
    <ligand>
        <name>ATP</name>
        <dbReference type="ChEBI" id="CHEBI:30616"/>
    </ligand>
</feature>
<feature type="binding site" evidence="1">
    <location>
        <position position="899"/>
    </location>
    <ligand>
        <name>Zn(2+)</name>
        <dbReference type="ChEBI" id="CHEBI:29105"/>
    </ligand>
</feature>
<feature type="binding site" evidence="1">
    <location>
        <position position="902"/>
    </location>
    <ligand>
        <name>Zn(2+)</name>
        <dbReference type="ChEBI" id="CHEBI:29105"/>
    </ligand>
</feature>
<feature type="binding site" evidence="1">
    <location>
        <position position="919"/>
    </location>
    <ligand>
        <name>Zn(2+)</name>
        <dbReference type="ChEBI" id="CHEBI:29105"/>
    </ligand>
</feature>
<feature type="binding site" evidence="1">
    <location>
        <position position="922"/>
    </location>
    <ligand>
        <name>Zn(2+)</name>
        <dbReference type="ChEBI" id="CHEBI:29105"/>
    </ligand>
</feature>
<organism>
    <name type="scientific">Caldanaerobacter subterraneus subsp. tengcongensis (strain DSM 15242 / JCM 11007 / NBRC 100824 / MB4)</name>
    <name type="common">Thermoanaerobacter tengcongensis</name>
    <dbReference type="NCBI Taxonomy" id="273068"/>
    <lineage>
        <taxon>Bacteria</taxon>
        <taxon>Bacillati</taxon>
        <taxon>Bacillota</taxon>
        <taxon>Clostridia</taxon>
        <taxon>Thermoanaerobacterales</taxon>
        <taxon>Thermoanaerobacteraceae</taxon>
        <taxon>Caldanaerobacter</taxon>
    </lineage>
</organism>
<name>SYI_CALS4</name>
<protein>
    <recommendedName>
        <fullName evidence="1">Isoleucine--tRNA ligase</fullName>
        <ecNumber evidence="1">6.1.1.5</ecNumber>
    </recommendedName>
    <alternativeName>
        <fullName evidence="1">Isoleucyl-tRNA synthetase</fullName>
        <shortName evidence="1">IleRS</shortName>
    </alternativeName>
</protein>
<reference key="1">
    <citation type="journal article" date="2002" name="Genome Res.">
        <title>A complete sequence of the T. tengcongensis genome.</title>
        <authorList>
            <person name="Bao Q."/>
            <person name="Tian Y."/>
            <person name="Li W."/>
            <person name="Xu Z."/>
            <person name="Xuan Z."/>
            <person name="Hu S."/>
            <person name="Dong W."/>
            <person name="Yang J."/>
            <person name="Chen Y."/>
            <person name="Xue Y."/>
            <person name="Xu Y."/>
            <person name="Lai X."/>
            <person name="Huang L."/>
            <person name="Dong X."/>
            <person name="Ma Y."/>
            <person name="Ling L."/>
            <person name="Tan H."/>
            <person name="Chen R."/>
            <person name="Wang J."/>
            <person name="Yu J."/>
            <person name="Yang H."/>
        </authorList>
    </citation>
    <scope>NUCLEOTIDE SEQUENCE [LARGE SCALE GENOMIC DNA]</scope>
    <source>
        <strain>DSM 15242 / JCM 11007 / NBRC 100824 / MB4</strain>
    </source>
</reference>
<evidence type="ECO:0000255" key="1">
    <source>
        <dbReference type="HAMAP-Rule" id="MF_02002"/>
    </source>
</evidence>
<gene>
    <name evidence="1" type="primary">ileS</name>
    <name type="ordered locus">TTE1594</name>
</gene>
<proteinExistence type="inferred from homology"/>
<dbReference type="EC" id="6.1.1.5" evidence="1"/>
<dbReference type="EMBL" id="AE008691">
    <property type="protein sequence ID" value="AAM24798.1"/>
    <property type="molecule type" value="Genomic_DNA"/>
</dbReference>
<dbReference type="RefSeq" id="WP_011025829.1">
    <property type="nucleotide sequence ID" value="NC_003869.1"/>
</dbReference>
<dbReference type="SMR" id="Q8R9L3"/>
<dbReference type="STRING" id="273068.TTE1594"/>
<dbReference type="KEGG" id="tte:TTE1594"/>
<dbReference type="eggNOG" id="COG0060">
    <property type="taxonomic scope" value="Bacteria"/>
</dbReference>
<dbReference type="HOGENOM" id="CLU_001493_7_0_9"/>
<dbReference type="OrthoDB" id="9810365at2"/>
<dbReference type="Proteomes" id="UP000000555">
    <property type="component" value="Chromosome"/>
</dbReference>
<dbReference type="GO" id="GO:0005829">
    <property type="term" value="C:cytosol"/>
    <property type="evidence" value="ECO:0007669"/>
    <property type="project" value="TreeGrafter"/>
</dbReference>
<dbReference type="GO" id="GO:0002161">
    <property type="term" value="F:aminoacyl-tRNA deacylase activity"/>
    <property type="evidence" value="ECO:0007669"/>
    <property type="project" value="InterPro"/>
</dbReference>
<dbReference type="GO" id="GO:0005524">
    <property type="term" value="F:ATP binding"/>
    <property type="evidence" value="ECO:0007669"/>
    <property type="project" value="UniProtKB-UniRule"/>
</dbReference>
<dbReference type="GO" id="GO:0004822">
    <property type="term" value="F:isoleucine-tRNA ligase activity"/>
    <property type="evidence" value="ECO:0007669"/>
    <property type="project" value="UniProtKB-UniRule"/>
</dbReference>
<dbReference type="GO" id="GO:0000049">
    <property type="term" value="F:tRNA binding"/>
    <property type="evidence" value="ECO:0007669"/>
    <property type="project" value="InterPro"/>
</dbReference>
<dbReference type="GO" id="GO:0008270">
    <property type="term" value="F:zinc ion binding"/>
    <property type="evidence" value="ECO:0007669"/>
    <property type="project" value="UniProtKB-UniRule"/>
</dbReference>
<dbReference type="GO" id="GO:0006428">
    <property type="term" value="P:isoleucyl-tRNA aminoacylation"/>
    <property type="evidence" value="ECO:0007669"/>
    <property type="project" value="UniProtKB-UniRule"/>
</dbReference>
<dbReference type="CDD" id="cd07960">
    <property type="entry name" value="Anticodon_Ia_Ile_BEm"/>
    <property type="match status" value="1"/>
</dbReference>
<dbReference type="CDD" id="cd00818">
    <property type="entry name" value="IleRS_core"/>
    <property type="match status" value="1"/>
</dbReference>
<dbReference type="FunFam" id="1.10.730.20:FF:000001">
    <property type="entry name" value="Isoleucine--tRNA ligase"/>
    <property type="match status" value="1"/>
</dbReference>
<dbReference type="FunFam" id="3.40.50.620:FF:000152">
    <property type="entry name" value="Isoleucine--tRNA ligase"/>
    <property type="match status" value="1"/>
</dbReference>
<dbReference type="Gene3D" id="1.10.730.20">
    <property type="match status" value="1"/>
</dbReference>
<dbReference type="Gene3D" id="3.40.50.620">
    <property type="entry name" value="HUPs"/>
    <property type="match status" value="2"/>
</dbReference>
<dbReference type="Gene3D" id="1.10.10.830">
    <property type="entry name" value="Ile-tRNA synthetase CP2 domain-like"/>
    <property type="match status" value="1"/>
</dbReference>
<dbReference type="HAMAP" id="MF_02002">
    <property type="entry name" value="Ile_tRNA_synth_type1"/>
    <property type="match status" value="1"/>
</dbReference>
<dbReference type="InterPro" id="IPR001412">
    <property type="entry name" value="aa-tRNA-synth_I_CS"/>
</dbReference>
<dbReference type="InterPro" id="IPR002300">
    <property type="entry name" value="aa-tRNA-synth_Ia"/>
</dbReference>
<dbReference type="InterPro" id="IPR033708">
    <property type="entry name" value="Anticodon_Ile_BEm"/>
</dbReference>
<dbReference type="InterPro" id="IPR002301">
    <property type="entry name" value="Ile-tRNA-ligase"/>
</dbReference>
<dbReference type="InterPro" id="IPR023585">
    <property type="entry name" value="Ile-tRNA-ligase_type1"/>
</dbReference>
<dbReference type="InterPro" id="IPR050081">
    <property type="entry name" value="Ile-tRNA_ligase"/>
</dbReference>
<dbReference type="InterPro" id="IPR013155">
    <property type="entry name" value="M/V/L/I-tRNA-synth_anticd-bd"/>
</dbReference>
<dbReference type="InterPro" id="IPR014729">
    <property type="entry name" value="Rossmann-like_a/b/a_fold"/>
</dbReference>
<dbReference type="InterPro" id="IPR009080">
    <property type="entry name" value="tRNAsynth_Ia_anticodon-bd"/>
</dbReference>
<dbReference type="InterPro" id="IPR009008">
    <property type="entry name" value="Val/Leu/Ile-tRNA-synth_edit"/>
</dbReference>
<dbReference type="InterPro" id="IPR010663">
    <property type="entry name" value="Znf_FPG/IleRS"/>
</dbReference>
<dbReference type="NCBIfam" id="TIGR00392">
    <property type="entry name" value="ileS"/>
    <property type="match status" value="1"/>
</dbReference>
<dbReference type="PANTHER" id="PTHR42765:SF1">
    <property type="entry name" value="ISOLEUCINE--TRNA LIGASE, MITOCHONDRIAL"/>
    <property type="match status" value="1"/>
</dbReference>
<dbReference type="PANTHER" id="PTHR42765">
    <property type="entry name" value="SOLEUCYL-TRNA SYNTHETASE"/>
    <property type="match status" value="1"/>
</dbReference>
<dbReference type="Pfam" id="PF08264">
    <property type="entry name" value="Anticodon_1"/>
    <property type="match status" value="1"/>
</dbReference>
<dbReference type="Pfam" id="PF00133">
    <property type="entry name" value="tRNA-synt_1"/>
    <property type="match status" value="1"/>
</dbReference>
<dbReference type="Pfam" id="PF06827">
    <property type="entry name" value="zf-FPG_IleRS"/>
    <property type="match status" value="1"/>
</dbReference>
<dbReference type="PRINTS" id="PR00984">
    <property type="entry name" value="TRNASYNTHILE"/>
</dbReference>
<dbReference type="SUPFAM" id="SSF47323">
    <property type="entry name" value="Anticodon-binding domain of a subclass of class I aminoacyl-tRNA synthetases"/>
    <property type="match status" value="1"/>
</dbReference>
<dbReference type="SUPFAM" id="SSF52374">
    <property type="entry name" value="Nucleotidylyl transferase"/>
    <property type="match status" value="1"/>
</dbReference>
<dbReference type="SUPFAM" id="SSF50677">
    <property type="entry name" value="ValRS/IleRS/LeuRS editing domain"/>
    <property type="match status" value="1"/>
</dbReference>
<dbReference type="PROSITE" id="PS00178">
    <property type="entry name" value="AA_TRNA_LIGASE_I"/>
    <property type="match status" value="1"/>
</dbReference>
<keyword id="KW-0030">Aminoacyl-tRNA synthetase</keyword>
<keyword id="KW-0067">ATP-binding</keyword>
<keyword id="KW-0963">Cytoplasm</keyword>
<keyword id="KW-0436">Ligase</keyword>
<keyword id="KW-0479">Metal-binding</keyword>
<keyword id="KW-0547">Nucleotide-binding</keyword>
<keyword id="KW-0648">Protein biosynthesis</keyword>
<keyword id="KW-1185">Reference proteome</keyword>
<keyword id="KW-0862">Zinc</keyword>
<sequence length="932" mass="108136">MDYNKTLNLPKTDFPMKANLPVREPEILKKWEEMDIYRRVLEKNKGKEKYILHDGPPYANGDIHIGTAMNKVLKDIVVKYKTMRGYDSPYVPGWDTHGLPIEQQVIKILGVKRHEMNPVEFRKVCKDFAFSQIERQRQQFKRLGVRGDWEKPYLTLDPEYEAKQIEVFGEMAKRGYIYKGLKPVYWCPSCETALAEAEIEYFDETSDSIYVKFRVRDDLGKFKGIVEDLSNVYFVIWTTTTWTIPANLAIALNPEFDYSLTKFGDEVYIIAKDMIEEVRKETGLGDYEILATFKGKELEGMKAVHPIYNRDSIVVLGEHVTLDAGTGCVHTAPGHGEEDFLVGQEYGLEALNPIDEKGYFTDKAPGYEGLYYAEANKVIKEDLRKANALLAEKKITHSYPHCWRCKSPILFRATEQWFASVEGFREEALKAIKEVNWYPAWGEERITNMVRDRKDWCISRQRVWGVPIPIFYCENCGKPLINDETINAVKELFRQKGSDAWFEMSAEEILPEGIKCECGSTKFRKETDIMDVWFDSGSSHAAVLETHPDLKWPAELYLEGSDQHRGWFQSSLLTAVATRGKAPYKNVLTHGFVVDGEGRKMSKSLGNVVDPAEVIQEYGADVLRLWVVSADYTADMRTSPEILKQIAEVYRKIRNTARFLLGNLYDFDPDKDMLPYEELLEIDKWALYRLNRLVKQLTESFDKYEFYDFFHPVHNFCVVDMSSLYLDILKDRLYTYPAKSKERKAAQTTLYIILDTLVKLMAPVLAFTSEEIWWHMKHDRNNNFESVQLADWPQVKEEYDNPYIIEKWEKLFDIRKDISKALEIARSEKKIGHSLDAQVDIYPSSELYEFFKGFEDLQYVFIVSKVVLHDPQEVAPENAYVSEDYDLKITVTRAPGEKCERCWMYSETVGTIKEHPTICARCASHIEEQLKV</sequence>
<comment type="function">
    <text evidence="1">Catalyzes the attachment of isoleucine to tRNA(Ile). As IleRS can inadvertently accommodate and process structurally similar amino acids such as valine, to avoid such errors it has two additional distinct tRNA(Ile)-dependent editing activities. One activity is designated as 'pretransfer' editing and involves the hydrolysis of activated Val-AMP. The other activity is designated 'posttransfer' editing and involves deacylation of mischarged Val-tRNA(Ile).</text>
</comment>
<comment type="catalytic activity">
    <reaction evidence="1">
        <text>tRNA(Ile) + L-isoleucine + ATP = L-isoleucyl-tRNA(Ile) + AMP + diphosphate</text>
        <dbReference type="Rhea" id="RHEA:11060"/>
        <dbReference type="Rhea" id="RHEA-COMP:9666"/>
        <dbReference type="Rhea" id="RHEA-COMP:9695"/>
        <dbReference type="ChEBI" id="CHEBI:30616"/>
        <dbReference type="ChEBI" id="CHEBI:33019"/>
        <dbReference type="ChEBI" id="CHEBI:58045"/>
        <dbReference type="ChEBI" id="CHEBI:78442"/>
        <dbReference type="ChEBI" id="CHEBI:78528"/>
        <dbReference type="ChEBI" id="CHEBI:456215"/>
        <dbReference type="EC" id="6.1.1.5"/>
    </reaction>
</comment>
<comment type="cofactor">
    <cofactor evidence="1">
        <name>Zn(2+)</name>
        <dbReference type="ChEBI" id="CHEBI:29105"/>
    </cofactor>
    <text evidence="1">Binds 1 zinc ion per subunit.</text>
</comment>
<comment type="subunit">
    <text evidence="1">Monomer.</text>
</comment>
<comment type="subcellular location">
    <subcellularLocation>
        <location evidence="1">Cytoplasm</location>
    </subcellularLocation>
</comment>
<comment type="domain">
    <text evidence="1">IleRS has two distinct active sites: one for aminoacylation and one for editing. The misactivated valine is translocated from the active site to the editing site, which sterically excludes the correctly activated isoleucine. The single editing site contains two valyl binding pockets, one specific for each substrate (Val-AMP or Val-tRNA(Ile)).</text>
</comment>
<comment type="similarity">
    <text evidence="1">Belongs to the class-I aminoacyl-tRNA synthetase family. IleS type 1 subfamily.</text>
</comment>